<organism>
    <name type="scientific">Renibacterium salmoninarum (strain ATCC 33209 / DSM 20767 / JCM 11484 / NBRC 15589 / NCIMB 2235)</name>
    <dbReference type="NCBI Taxonomy" id="288705"/>
    <lineage>
        <taxon>Bacteria</taxon>
        <taxon>Bacillati</taxon>
        <taxon>Actinomycetota</taxon>
        <taxon>Actinomycetes</taxon>
        <taxon>Micrococcales</taxon>
        <taxon>Micrococcaceae</taxon>
        <taxon>Renibacterium</taxon>
    </lineage>
</organism>
<protein>
    <recommendedName>
        <fullName evidence="1">Elongation factor G</fullName>
        <shortName evidence="1">EF-G</shortName>
    </recommendedName>
</protein>
<name>EFG_RENSM</name>
<dbReference type="EMBL" id="CP000910">
    <property type="protein sequence ID" value="ABY23904.1"/>
    <property type="molecule type" value="Genomic_DNA"/>
</dbReference>
<dbReference type="RefSeq" id="WP_012245570.1">
    <property type="nucleotide sequence ID" value="NC_010168.1"/>
</dbReference>
<dbReference type="SMR" id="A9WSW6"/>
<dbReference type="STRING" id="288705.RSal33209_2172"/>
<dbReference type="KEGG" id="rsa:RSal33209_2172"/>
<dbReference type="eggNOG" id="COG0480">
    <property type="taxonomic scope" value="Bacteria"/>
</dbReference>
<dbReference type="HOGENOM" id="CLU_002794_4_1_11"/>
<dbReference type="Proteomes" id="UP000002007">
    <property type="component" value="Chromosome"/>
</dbReference>
<dbReference type="GO" id="GO:0005737">
    <property type="term" value="C:cytoplasm"/>
    <property type="evidence" value="ECO:0007669"/>
    <property type="project" value="UniProtKB-SubCell"/>
</dbReference>
<dbReference type="GO" id="GO:0005525">
    <property type="term" value="F:GTP binding"/>
    <property type="evidence" value="ECO:0007669"/>
    <property type="project" value="UniProtKB-UniRule"/>
</dbReference>
<dbReference type="GO" id="GO:0003924">
    <property type="term" value="F:GTPase activity"/>
    <property type="evidence" value="ECO:0007669"/>
    <property type="project" value="InterPro"/>
</dbReference>
<dbReference type="GO" id="GO:0003746">
    <property type="term" value="F:translation elongation factor activity"/>
    <property type="evidence" value="ECO:0007669"/>
    <property type="project" value="UniProtKB-UniRule"/>
</dbReference>
<dbReference type="GO" id="GO:0032790">
    <property type="term" value="P:ribosome disassembly"/>
    <property type="evidence" value="ECO:0007669"/>
    <property type="project" value="TreeGrafter"/>
</dbReference>
<dbReference type="CDD" id="cd01886">
    <property type="entry name" value="EF-G"/>
    <property type="match status" value="1"/>
</dbReference>
<dbReference type="CDD" id="cd16262">
    <property type="entry name" value="EFG_III"/>
    <property type="match status" value="1"/>
</dbReference>
<dbReference type="CDD" id="cd01434">
    <property type="entry name" value="EFG_mtEFG1_IV"/>
    <property type="match status" value="1"/>
</dbReference>
<dbReference type="CDD" id="cd03713">
    <property type="entry name" value="EFG_mtEFG_C"/>
    <property type="match status" value="1"/>
</dbReference>
<dbReference type="CDD" id="cd04088">
    <property type="entry name" value="EFG_mtEFG_II"/>
    <property type="match status" value="1"/>
</dbReference>
<dbReference type="FunFam" id="2.40.30.10:FF:000006">
    <property type="entry name" value="Elongation factor G"/>
    <property type="match status" value="1"/>
</dbReference>
<dbReference type="FunFam" id="3.30.230.10:FF:000003">
    <property type="entry name" value="Elongation factor G"/>
    <property type="match status" value="1"/>
</dbReference>
<dbReference type="FunFam" id="3.30.70.240:FF:000001">
    <property type="entry name" value="Elongation factor G"/>
    <property type="match status" value="1"/>
</dbReference>
<dbReference type="FunFam" id="3.30.70.870:FF:000001">
    <property type="entry name" value="Elongation factor G"/>
    <property type="match status" value="1"/>
</dbReference>
<dbReference type="FunFam" id="3.40.50.300:FF:000029">
    <property type="entry name" value="Elongation factor G"/>
    <property type="match status" value="1"/>
</dbReference>
<dbReference type="Gene3D" id="3.30.230.10">
    <property type="match status" value="1"/>
</dbReference>
<dbReference type="Gene3D" id="3.30.70.240">
    <property type="match status" value="1"/>
</dbReference>
<dbReference type="Gene3D" id="3.30.70.870">
    <property type="entry name" value="Elongation Factor G (Translational Gtpase), domain 3"/>
    <property type="match status" value="1"/>
</dbReference>
<dbReference type="Gene3D" id="3.40.50.300">
    <property type="entry name" value="P-loop containing nucleotide triphosphate hydrolases"/>
    <property type="match status" value="1"/>
</dbReference>
<dbReference type="Gene3D" id="2.40.30.10">
    <property type="entry name" value="Translation factors"/>
    <property type="match status" value="1"/>
</dbReference>
<dbReference type="HAMAP" id="MF_00054_B">
    <property type="entry name" value="EF_G_EF_2_B"/>
    <property type="match status" value="1"/>
</dbReference>
<dbReference type="InterPro" id="IPR041095">
    <property type="entry name" value="EFG_II"/>
</dbReference>
<dbReference type="InterPro" id="IPR009022">
    <property type="entry name" value="EFG_III"/>
</dbReference>
<dbReference type="InterPro" id="IPR035647">
    <property type="entry name" value="EFG_III/V"/>
</dbReference>
<dbReference type="InterPro" id="IPR047872">
    <property type="entry name" value="EFG_IV"/>
</dbReference>
<dbReference type="InterPro" id="IPR035649">
    <property type="entry name" value="EFG_V"/>
</dbReference>
<dbReference type="InterPro" id="IPR000640">
    <property type="entry name" value="EFG_V-like"/>
</dbReference>
<dbReference type="InterPro" id="IPR004161">
    <property type="entry name" value="EFTu-like_2"/>
</dbReference>
<dbReference type="InterPro" id="IPR031157">
    <property type="entry name" value="G_TR_CS"/>
</dbReference>
<dbReference type="InterPro" id="IPR027417">
    <property type="entry name" value="P-loop_NTPase"/>
</dbReference>
<dbReference type="InterPro" id="IPR020568">
    <property type="entry name" value="Ribosomal_Su5_D2-typ_SF"/>
</dbReference>
<dbReference type="InterPro" id="IPR014721">
    <property type="entry name" value="Ribsml_uS5_D2-typ_fold_subgr"/>
</dbReference>
<dbReference type="InterPro" id="IPR005225">
    <property type="entry name" value="Small_GTP-bd"/>
</dbReference>
<dbReference type="InterPro" id="IPR000795">
    <property type="entry name" value="T_Tr_GTP-bd_dom"/>
</dbReference>
<dbReference type="InterPro" id="IPR009000">
    <property type="entry name" value="Transl_B-barrel_sf"/>
</dbReference>
<dbReference type="InterPro" id="IPR004540">
    <property type="entry name" value="Transl_elong_EFG/EF2"/>
</dbReference>
<dbReference type="InterPro" id="IPR005517">
    <property type="entry name" value="Transl_elong_EFG/EF2_IV"/>
</dbReference>
<dbReference type="NCBIfam" id="TIGR00484">
    <property type="entry name" value="EF-G"/>
    <property type="match status" value="1"/>
</dbReference>
<dbReference type="NCBIfam" id="NF009381">
    <property type="entry name" value="PRK12740.1-5"/>
    <property type="match status" value="1"/>
</dbReference>
<dbReference type="NCBIfam" id="TIGR00231">
    <property type="entry name" value="small_GTP"/>
    <property type="match status" value="1"/>
</dbReference>
<dbReference type="PANTHER" id="PTHR43261:SF1">
    <property type="entry name" value="RIBOSOME-RELEASING FACTOR 2, MITOCHONDRIAL"/>
    <property type="match status" value="1"/>
</dbReference>
<dbReference type="PANTHER" id="PTHR43261">
    <property type="entry name" value="TRANSLATION ELONGATION FACTOR G-RELATED"/>
    <property type="match status" value="1"/>
</dbReference>
<dbReference type="Pfam" id="PF00679">
    <property type="entry name" value="EFG_C"/>
    <property type="match status" value="1"/>
</dbReference>
<dbReference type="Pfam" id="PF14492">
    <property type="entry name" value="EFG_III"/>
    <property type="match status" value="1"/>
</dbReference>
<dbReference type="Pfam" id="PF03764">
    <property type="entry name" value="EFG_IV"/>
    <property type="match status" value="1"/>
</dbReference>
<dbReference type="Pfam" id="PF00009">
    <property type="entry name" value="GTP_EFTU"/>
    <property type="match status" value="1"/>
</dbReference>
<dbReference type="Pfam" id="PF03144">
    <property type="entry name" value="GTP_EFTU_D2"/>
    <property type="match status" value="1"/>
</dbReference>
<dbReference type="PRINTS" id="PR00315">
    <property type="entry name" value="ELONGATNFCT"/>
</dbReference>
<dbReference type="SMART" id="SM00838">
    <property type="entry name" value="EFG_C"/>
    <property type="match status" value="1"/>
</dbReference>
<dbReference type="SMART" id="SM00889">
    <property type="entry name" value="EFG_IV"/>
    <property type="match status" value="1"/>
</dbReference>
<dbReference type="SUPFAM" id="SSF54980">
    <property type="entry name" value="EF-G C-terminal domain-like"/>
    <property type="match status" value="2"/>
</dbReference>
<dbReference type="SUPFAM" id="SSF52540">
    <property type="entry name" value="P-loop containing nucleoside triphosphate hydrolases"/>
    <property type="match status" value="1"/>
</dbReference>
<dbReference type="SUPFAM" id="SSF54211">
    <property type="entry name" value="Ribosomal protein S5 domain 2-like"/>
    <property type="match status" value="1"/>
</dbReference>
<dbReference type="SUPFAM" id="SSF50447">
    <property type="entry name" value="Translation proteins"/>
    <property type="match status" value="1"/>
</dbReference>
<dbReference type="PROSITE" id="PS00301">
    <property type="entry name" value="G_TR_1"/>
    <property type="match status" value="1"/>
</dbReference>
<dbReference type="PROSITE" id="PS51722">
    <property type="entry name" value="G_TR_2"/>
    <property type="match status" value="1"/>
</dbReference>
<sequence>MAQDVLTDLNKVRNIGIMAHIDAGKTTTTERILFYTGVNHKIGETHDGASTTDWMEQEKERGITITSAAVTSFWNGNQINIIDTPGHVDFTVEVERSLRVLDGAVAVFDGKEGVEPQSETVWRQADKYEVPRICFVNKMDKLGADFYFTVDTIINRLGAKPLVIQLPIGAENDFVGVVDLLEMRALVWPGDSKGDVTMGAKYEVQEIPADLLEKAQEYRAALVEAAAEASEELMEKYLEGEELTVAELKAGIRKLTIASEIYPVLCGSAFKNRGVQPMLDAVVDFLPSPLDVPPMIGHDPRNEETEMTRKPSTDEPFSALAFKVATHPFFGQLVFIRVYSGQIASGTQVINSTKGKKERIGKLFQMHANKENPVEEALAGHIYAAIGLKDTTTGDTLADITNPIVLESMSFPEPVISVAIEPKTKGDQEKLSTAIQKLSAEDPTFRVNLDEDTGQTIIAGMGELHLDILVDRMRREFRVEANVGKPQVAYRETIRRKVEKHDYTHKKQTGGSGQFAKIQIAIEPFTSEEGVLYEFENKVTGGRVPREYIPSVDQGIQSALTDGVLAGYPVVGIKATLLDGAYHDVDSSEMAFKIAGRMAFKEAARKADPVLLEPLMEVEVRTPEEYMGDVIGDLNSRRGQMQSMEDASGVKVIRSLVPLSGMFGYIGDLRSKTQGRAVYSMQFDSYAEVPKAVSDEIIQKARGE</sequence>
<proteinExistence type="inferred from homology"/>
<comment type="function">
    <text evidence="1">Catalyzes the GTP-dependent ribosomal translocation step during translation elongation. During this step, the ribosome changes from the pre-translocational (PRE) to the post-translocational (POST) state as the newly formed A-site-bound peptidyl-tRNA and P-site-bound deacylated tRNA move to the P and E sites, respectively. Catalyzes the coordinated movement of the two tRNA molecules, the mRNA and conformational changes in the ribosome.</text>
</comment>
<comment type="subcellular location">
    <subcellularLocation>
        <location evidence="1">Cytoplasm</location>
    </subcellularLocation>
</comment>
<comment type="similarity">
    <text evidence="1">Belongs to the TRAFAC class translation factor GTPase superfamily. Classic translation factor GTPase family. EF-G/EF-2 subfamily.</text>
</comment>
<evidence type="ECO:0000255" key="1">
    <source>
        <dbReference type="HAMAP-Rule" id="MF_00054"/>
    </source>
</evidence>
<evidence type="ECO:0000256" key="2">
    <source>
        <dbReference type="SAM" id="MobiDB-lite"/>
    </source>
</evidence>
<gene>
    <name evidence="1" type="primary">fusA</name>
    <name type="ordered locus">RSal33209_2172</name>
</gene>
<feature type="chain" id="PRO_0000335852" description="Elongation factor G">
    <location>
        <begin position="1"/>
        <end position="704"/>
    </location>
</feature>
<feature type="domain" description="tr-type G">
    <location>
        <begin position="10"/>
        <end position="290"/>
    </location>
</feature>
<feature type="region of interest" description="Disordered" evidence="2">
    <location>
        <begin position="293"/>
        <end position="313"/>
    </location>
</feature>
<feature type="compositionally biased region" description="Basic and acidic residues" evidence="2">
    <location>
        <begin position="298"/>
        <end position="313"/>
    </location>
</feature>
<feature type="binding site" evidence="1">
    <location>
        <begin position="19"/>
        <end position="26"/>
    </location>
    <ligand>
        <name>GTP</name>
        <dbReference type="ChEBI" id="CHEBI:37565"/>
    </ligand>
</feature>
<feature type="binding site" evidence="1">
    <location>
        <begin position="83"/>
        <end position="87"/>
    </location>
    <ligand>
        <name>GTP</name>
        <dbReference type="ChEBI" id="CHEBI:37565"/>
    </ligand>
</feature>
<feature type="binding site" evidence="1">
    <location>
        <begin position="137"/>
        <end position="140"/>
    </location>
    <ligand>
        <name>GTP</name>
        <dbReference type="ChEBI" id="CHEBI:37565"/>
    </ligand>
</feature>
<accession>A9WSW6</accession>
<reference key="1">
    <citation type="journal article" date="2008" name="J. Bacteriol.">
        <title>Genome sequence of the fish pathogen Renibacterium salmoninarum suggests reductive evolution away from an environmental Arthrobacter ancestor.</title>
        <authorList>
            <person name="Wiens G.D."/>
            <person name="Rockey D.D."/>
            <person name="Wu Z."/>
            <person name="Chang J."/>
            <person name="Levy R."/>
            <person name="Crane S."/>
            <person name="Chen D.S."/>
            <person name="Capri G.R."/>
            <person name="Burnett J.R."/>
            <person name="Sudheesh P.S."/>
            <person name="Schipma M.J."/>
            <person name="Burd H."/>
            <person name="Bhattacharyya A."/>
            <person name="Rhodes L.D."/>
            <person name="Kaul R."/>
            <person name="Strom M.S."/>
        </authorList>
    </citation>
    <scope>NUCLEOTIDE SEQUENCE [LARGE SCALE GENOMIC DNA]</scope>
    <source>
        <strain>ATCC 33209 / DSM 20767 / JCM 11484 / NBRC 15589 / NCIMB 2235</strain>
    </source>
</reference>
<keyword id="KW-0963">Cytoplasm</keyword>
<keyword id="KW-0251">Elongation factor</keyword>
<keyword id="KW-0342">GTP-binding</keyword>
<keyword id="KW-0547">Nucleotide-binding</keyword>
<keyword id="KW-0648">Protein biosynthesis</keyword>
<keyword id="KW-1185">Reference proteome</keyword>